<organism>
    <name type="scientific">Bradyrhizobium sp. (strain BTAi1 / ATCC BAA-1182)</name>
    <dbReference type="NCBI Taxonomy" id="288000"/>
    <lineage>
        <taxon>Bacteria</taxon>
        <taxon>Pseudomonadati</taxon>
        <taxon>Pseudomonadota</taxon>
        <taxon>Alphaproteobacteria</taxon>
        <taxon>Hyphomicrobiales</taxon>
        <taxon>Nitrobacteraceae</taxon>
        <taxon>Bradyrhizobium</taxon>
    </lineage>
</organism>
<comment type="function">
    <text evidence="1">Catalyzes the reversible phosphorylation of UMP to UDP.</text>
</comment>
<comment type="catalytic activity">
    <reaction evidence="1">
        <text>UMP + ATP = UDP + ADP</text>
        <dbReference type="Rhea" id="RHEA:24400"/>
        <dbReference type="ChEBI" id="CHEBI:30616"/>
        <dbReference type="ChEBI" id="CHEBI:57865"/>
        <dbReference type="ChEBI" id="CHEBI:58223"/>
        <dbReference type="ChEBI" id="CHEBI:456216"/>
        <dbReference type="EC" id="2.7.4.22"/>
    </reaction>
</comment>
<comment type="activity regulation">
    <text evidence="1">Inhibited by UTP.</text>
</comment>
<comment type="pathway">
    <text evidence="1">Pyrimidine metabolism; CTP biosynthesis via de novo pathway; UDP from UMP (UMPK route): step 1/1.</text>
</comment>
<comment type="subunit">
    <text evidence="1">Homohexamer.</text>
</comment>
<comment type="subcellular location">
    <subcellularLocation>
        <location evidence="1">Cytoplasm</location>
    </subcellularLocation>
</comment>
<comment type="similarity">
    <text evidence="1">Belongs to the UMP kinase family.</text>
</comment>
<feature type="chain" id="PRO_0000323802" description="Uridylate kinase">
    <location>
        <begin position="1"/>
        <end position="238"/>
    </location>
</feature>
<feature type="binding site" evidence="1">
    <location>
        <begin position="12"/>
        <end position="15"/>
    </location>
    <ligand>
        <name>ATP</name>
        <dbReference type="ChEBI" id="CHEBI:30616"/>
    </ligand>
</feature>
<feature type="binding site" evidence="1">
    <location>
        <position position="54"/>
    </location>
    <ligand>
        <name>UMP</name>
        <dbReference type="ChEBI" id="CHEBI:57865"/>
    </ligand>
</feature>
<feature type="binding site" evidence="1">
    <location>
        <position position="55"/>
    </location>
    <ligand>
        <name>ATP</name>
        <dbReference type="ChEBI" id="CHEBI:30616"/>
    </ligand>
</feature>
<feature type="binding site" evidence="1">
    <location>
        <position position="59"/>
    </location>
    <ligand>
        <name>ATP</name>
        <dbReference type="ChEBI" id="CHEBI:30616"/>
    </ligand>
</feature>
<feature type="binding site" evidence="1">
    <location>
        <position position="74"/>
    </location>
    <ligand>
        <name>UMP</name>
        <dbReference type="ChEBI" id="CHEBI:57865"/>
    </ligand>
</feature>
<feature type="binding site" evidence="1">
    <location>
        <begin position="135"/>
        <end position="142"/>
    </location>
    <ligand>
        <name>UMP</name>
        <dbReference type="ChEBI" id="CHEBI:57865"/>
    </ligand>
</feature>
<feature type="binding site" evidence="1">
    <location>
        <position position="162"/>
    </location>
    <ligand>
        <name>ATP</name>
        <dbReference type="ChEBI" id="CHEBI:30616"/>
    </ligand>
</feature>
<feature type="binding site" evidence="1">
    <location>
        <position position="163"/>
    </location>
    <ligand>
        <name>ATP</name>
        <dbReference type="ChEBI" id="CHEBI:30616"/>
    </ligand>
</feature>
<feature type="binding site" evidence="1">
    <location>
        <position position="168"/>
    </location>
    <ligand>
        <name>ATP</name>
        <dbReference type="ChEBI" id="CHEBI:30616"/>
    </ligand>
</feature>
<feature type="binding site" evidence="1">
    <location>
        <position position="171"/>
    </location>
    <ligand>
        <name>ATP</name>
        <dbReference type="ChEBI" id="CHEBI:30616"/>
    </ligand>
</feature>
<reference key="1">
    <citation type="journal article" date="2007" name="Science">
        <title>Legumes symbioses: absence of nod genes in photosynthetic bradyrhizobia.</title>
        <authorList>
            <person name="Giraud E."/>
            <person name="Moulin L."/>
            <person name="Vallenet D."/>
            <person name="Barbe V."/>
            <person name="Cytryn E."/>
            <person name="Avarre J.-C."/>
            <person name="Jaubert M."/>
            <person name="Simon D."/>
            <person name="Cartieaux F."/>
            <person name="Prin Y."/>
            <person name="Bena G."/>
            <person name="Hannibal L."/>
            <person name="Fardoux J."/>
            <person name="Kojadinovic M."/>
            <person name="Vuillet L."/>
            <person name="Lajus A."/>
            <person name="Cruveiller S."/>
            <person name="Rouy Z."/>
            <person name="Mangenot S."/>
            <person name="Segurens B."/>
            <person name="Dossat C."/>
            <person name="Franck W.L."/>
            <person name="Chang W.-S."/>
            <person name="Saunders E."/>
            <person name="Bruce D."/>
            <person name="Richardson P."/>
            <person name="Normand P."/>
            <person name="Dreyfus B."/>
            <person name="Pignol D."/>
            <person name="Stacey G."/>
            <person name="Emerich D."/>
            <person name="Vermeglio A."/>
            <person name="Medigue C."/>
            <person name="Sadowsky M."/>
        </authorList>
    </citation>
    <scope>NUCLEOTIDE SEQUENCE [LARGE SCALE GENOMIC DNA]</scope>
    <source>
        <strain>BTAi1 / ATCC BAA-1182</strain>
    </source>
</reference>
<protein>
    <recommendedName>
        <fullName evidence="1">Uridylate kinase</fullName>
        <shortName evidence="1">UK</shortName>
        <ecNumber evidence="1">2.7.4.22</ecNumber>
    </recommendedName>
    <alternativeName>
        <fullName evidence="1">Uridine monophosphate kinase</fullName>
        <shortName evidence="1">UMP kinase</shortName>
        <shortName evidence="1">UMPK</shortName>
    </alternativeName>
</protein>
<keyword id="KW-0067">ATP-binding</keyword>
<keyword id="KW-0963">Cytoplasm</keyword>
<keyword id="KW-0418">Kinase</keyword>
<keyword id="KW-0547">Nucleotide-binding</keyword>
<keyword id="KW-0665">Pyrimidine biosynthesis</keyword>
<keyword id="KW-1185">Reference proteome</keyword>
<keyword id="KW-0808">Transferase</keyword>
<name>PYRH_BRASB</name>
<proteinExistence type="inferred from homology"/>
<evidence type="ECO:0000255" key="1">
    <source>
        <dbReference type="HAMAP-Rule" id="MF_01220"/>
    </source>
</evidence>
<dbReference type="EC" id="2.7.4.22" evidence="1"/>
<dbReference type="EMBL" id="CP000494">
    <property type="protein sequence ID" value="ABQ36547.1"/>
    <property type="molecule type" value="Genomic_DNA"/>
</dbReference>
<dbReference type="RefSeq" id="WP_012044543.1">
    <property type="nucleotide sequence ID" value="NC_009485.1"/>
</dbReference>
<dbReference type="SMR" id="A5EK53"/>
<dbReference type="STRING" id="288000.BBta_4515"/>
<dbReference type="KEGG" id="bbt:BBta_4515"/>
<dbReference type="eggNOG" id="COG0528">
    <property type="taxonomic scope" value="Bacteria"/>
</dbReference>
<dbReference type="HOGENOM" id="CLU_033861_0_0_5"/>
<dbReference type="OrthoDB" id="9807458at2"/>
<dbReference type="UniPathway" id="UPA00159">
    <property type="reaction ID" value="UER00275"/>
</dbReference>
<dbReference type="Proteomes" id="UP000000246">
    <property type="component" value="Chromosome"/>
</dbReference>
<dbReference type="GO" id="GO:0005829">
    <property type="term" value="C:cytosol"/>
    <property type="evidence" value="ECO:0007669"/>
    <property type="project" value="TreeGrafter"/>
</dbReference>
<dbReference type="GO" id="GO:0005524">
    <property type="term" value="F:ATP binding"/>
    <property type="evidence" value="ECO:0007669"/>
    <property type="project" value="UniProtKB-KW"/>
</dbReference>
<dbReference type="GO" id="GO:0033862">
    <property type="term" value="F:UMP kinase activity"/>
    <property type="evidence" value="ECO:0007669"/>
    <property type="project" value="UniProtKB-EC"/>
</dbReference>
<dbReference type="GO" id="GO:0044210">
    <property type="term" value="P:'de novo' CTP biosynthetic process"/>
    <property type="evidence" value="ECO:0007669"/>
    <property type="project" value="UniProtKB-UniRule"/>
</dbReference>
<dbReference type="GO" id="GO:0006225">
    <property type="term" value="P:UDP biosynthetic process"/>
    <property type="evidence" value="ECO:0007669"/>
    <property type="project" value="TreeGrafter"/>
</dbReference>
<dbReference type="CDD" id="cd04254">
    <property type="entry name" value="AAK_UMPK-PyrH-Ec"/>
    <property type="match status" value="1"/>
</dbReference>
<dbReference type="FunFam" id="3.40.1160.10:FF:000001">
    <property type="entry name" value="Uridylate kinase"/>
    <property type="match status" value="1"/>
</dbReference>
<dbReference type="Gene3D" id="3.40.1160.10">
    <property type="entry name" value="Acetylglutamate kinase-like"/>
    <property type="match status" value="1"/>
</dbReference>
<dbReference type="HAMAP" id="MF_01220_B">
    <property type="entry name" value="PyrH_B"/>
    <property type="match status" value="1"/>
</dbReference>
<dbReference type="InterPro" id="IPR036393">
    <property type="entry name" value="AceGlu_kinase-like_sf"/>
</dbReference>
<dbReference type="InterPro" id="IPR001048">
    <property type="entry name" value="Asp/Glu/Uridylate_kinase"/>
</dbReference>
<dbReference type="InterPro" id="IPR011817">
    <property type="entry name" value="Uridylate_kinase"/>
</dbReference>
<dbReference type="InterPro" id="IPR015963">
    <property type="entry name" value="Uridylate_kinase_bac"/>
</dbReference>
<dbReference type="NCBIfam" id="TIGR02075">
    <property type="entry name" value="pyrH_bact"/>
    <property type="match status" value="1"/>
</dbReference>
<dbReference type="PANTHER" id="PTHR42833">
    <property type="entry name" value="URIDYLATE KINASE"/>
    <property type="match status" value="1"/>
</dbReference>
<dbReference type="PANTHER" id="PTHR42833:SF4">
    <property type="entry name" value="URIDYLATE KINASE PUMPKIN, CHLOROPLASTIC"/>
    <property type="match status" value="1"/>
</dbReference>
<dbReference type="Pfam" id="PF00696">
    <property type="entry name" value="AA_kinase"/>
    <property type="match status" value="1"/>
</dbReference>
<dbReference type="PIRSF" id="PIRSF005650">
    <property type="entry name" value="Uridylate_kin"/>
    <property type="match status" value="1"/>
</dbReference>
<dbReference type="SUPFAM" id="SSF53633">
    <property type="entry name" value="Carbamate kinase-like"/>
    <property type="match status" value="1"/>
</dbReference>
<sequence>MAEPVYRRVVVKLSGEYLAGPHSFGIDQATVDRIADDLIAAQKLGIEIAVVVGGGNMVRGVEVSSQGVSRPTGDTMGMLATVMNCLALEAAIQRKGAPAQALSAFVMPQVCELFTRAAAHKALAEGRIVVLGGGTGNPYFTTDTTAVLRAAEIGAQAVLKATNVDGVYSADPKKDPAAKRFDRLTHSQAIEGGYKVMDATAFALARETSLPIIVFSIAEPGAIGAMLRGEGRGTIVAG</sequence>
<accession>A5EK53</accession>
<gene>
    <name evidence="1" type="primary">pyrH</name>
    <name type="ordered locus">BBta_4515</name>
</gene>